<feature type="chain" id="PRO_1000092602" description="Transcription antitermination protein NusB">
    <location>
        <begin position="1"/>
        <end position="157"/>
    </location>
</feature>
<accession>B2I8Q4</accession>
<organism>
    <name type="scientific">Xylella fastidiosa (strain M23)</name>
    <dbReference type="NCBI Taxonomy" id="405441"/>
    <lineage>
        <taxon>Bacteria</taxon>
        <taxon>Pseudomonadati</taxon>
        <taxon>Pseudomonadota</taxon>
        <taxon>Gammaproteobacteria</taxon>
        <taxon>Lysobacterales</taxon>
        <taxon>Lysobacteraceae</taxon>
        <taxon>Xylella</taxon>
    </lineage>
</organism>
<protein>
    <recommendedName>
        <fullName evidence="1">Transcription antitermination protein NusB</fullName>
    </recommendedName>
    <alternativeName>
        <fullName evidence="1">Antitermination factor NusB</fullName>
    </alternativeName>
</protein>
<name>NUSB_XYLF2</name>
<sequence length="157" mass="17579">MSKVSGGGPCSRRRDGVDPALRSRARRRALQAVYAWQISGGVAKQVIAHFAHEQAYEVADLVYFEDLVEGVLTHCAELDEKLTPYLDRTIEEVDAIERAVLRLGAYELLYRQDVPYRVVINEAIMTAKRFGSKYGHTYVNGVLDRAALALRKVEVLG</sequence>
<comment type="function">
    <text evidence="1">Involved in transcription antitermination. Required for transcription of ribosomal RNA (rRNA) genes. Binds specifically to the boxA antiterminator sequence of the ribosomal RNA (rrn) operons.</text>
</comment>
<comment type="similarity">
    <text evidence="1">Belongs to the NusB family.</text>
</comment>
<evidence type="ECO:0000255" key="1">
    <source>
        <dbReference type="HAMAP-Rule" id="MF_00073"/>
    </source>
</evidence>
<reference key="1">
    <citation type="journal article" date="2010" name="J. Bacteriol.">
        <title>Whole genome sequences of two Xylella fastidiosa strains (M12 and M23) causing almond leaf scorch disease in California.</title>
        <authorList>
            <person name="Chen J."/>
            <person name="Xie G."/>
            <person name="Han S."/>
            <person name="Chertkov O."/>
            <person name="Sims D."/>
            <person name="Civerolo E.L."/>
        </authorList>
    </citation>
    <scope>NUCLEOTIDE SEQUENCE [LARGE SCALE GENOMIC DNA]</scope>
    <source>
        <strain>M23</strain>
    </source>
</reference>
<keyword id="KW-0694">RNA-binding</keyword>
<keyword id="KW-0804">Transcription</keyword>
<keyword id="KW-0889">Transcription antitermination</keyword>
<keyword id="KW-0805">Transcription regulation</keyword>
<gene>
    <name evidence="1" type="primary">nusB</name>
    <name type="ordered locus">XfasM23_1844</name>
</gene>
<proteinExistence type="inferred from homology"/>
<dbReference type="EMBL" id="CP001011">
    <property type="protein sequence ID" value="ACB93245.1"/>
    <property type="molecule type" value="Genomic_DNA"/>
</dbReference>
<dbReference type="RefSeq" id="WP_004089680.1">
    <property type="nucleotide sequence ID" value="NC_010577.1"/>
</dbReference>
<dbReference type="SMR" id="B2I8Q4"/>
<dbReference type="GeneID" id="93905589"/>
<dbReference type="KEGG" id="xfn:XfasM23_1844"/>
<dbReference type="HOGENOM" id="CLU_087843_4_1_6"/>
<dbReference type="Proteomes" id="UP000001698">
    <property type="component" value="Chromosome"/>
</dbReference>
<dbReference type="GO" id="GO:0005829">
    <property type="term" value="C:cytosol"/>
    <property type="evidence" value="ECO:0007669"/>
    <property type="project" value="TreeGrafter"/>
</dbReference>
<dbReference type="GO" id="GO:0003723">
    <property type="term" value="F:RNA binding"/>
    <property type="evidence" value="ECO:0007669"/>
    <property type="project" value="UniProtKB-UniRule"/>
</dbReference>
<dbReference type="GO" id="GO:0006353">
    <property type="term" value="P:DNA-templated transcription termination"/>
    <property type="evidence" value="ECO:0007669"/>
    <property type="project" value="UniProtKB-UniRule"/>
</dbReference>
<dbReference type="GO" id="GO:0031564">
    <property type="term" value="P:transcription antitermination"/>
    <property type="evidence" value="ECO:0007669"/>
    <property type="project" value="UniProtKB-KW"/>
</dbReference>
<dbReference type="FunFam" id="1.10.940.10:FF:000001">
    <property type="entry name" value="Transcription antitermination factor NusB"/>
    <property type="match status" value="1"/>
</dbReference>
<dbReference type="Gene3D" id="1.10.940.10">
    <property type="entry name" value="NusB-like"/>
    <property type="match status" value="1"/>
</dbReference>
<dbReference type="HAMAP" id="MF_00073">
    <property type="entry name" value="NusB"/>
    <property type="match status" value="1"/>
</dbReference>
<dbReference type="InterPro" id="IPR035926">
    <property type="entry name" value="NusB-like_sf"/>
</dbReference>
<dbReference type="InterPro" id="IPR011605">
    <property type="entry name" value="NusB_fam"/>
</dbReference>
<dbReference type="InterPro" id="IPR006027">
    <property type="entry name" value="NusB_RsmB_TIM44"/>
</dbReference>
<dbReference type="NCBIfam" id="TIGR01951">
    <property type="entry name" value="nusB"/>
    <property type="match status" value="1"/>
</dbReference>
<dbReference type="PANTHER" id="PTHR11078:SF3">
    <property type="entry name" value="ANTITERMINATION NUSB DOMAIN-CONTAINING PROTEIN"/>
    <property type="match status" value="1"/>
</dbReference>
<dbReference type="PANTHER" id="PTHR11078">
    <property type="entry name" value="N UTILIZATION SUBSTANCE PROTEIN B-RELATED"/>
    <property type="match status" value="1"/>
</dbReference>
<dbReference type="Pfam" id="PF01029">
    <property type="entry name" value="NusB"/>
    <property type="match status" value="1"/>
</dbReference>
<dbReference type="SUPFAM" id="SSF48013">
    <property type="entry name" value="NusB-like"/>
    <property type="match status" value="1"/>
</dbReference>